<protein>
    <recommendedName>
        <fullName evidence="1">ATP synthase epsilon chain</fullName>
    </recommendedName>
    <alternativeName>
        <fullName evidence="1">ATP synthase F1 sector epsilon subunit</fullName>
    </alternativeName>
    <alternativeName>
        <fullName evidence="1">F-ATPase epsilon subunit</fullName>
    </alternativeName>
</protein>
<name>ATPE_RHOCS</name>
<proteinExistence type="inferred from homology"/>
<keyword id="KW-0066">ATP synthesis</keyword>
<keyword id="KW-0997">Cell inner membrane</keyword>
<keyword id="KW-1003">Cell membrane</keyword>
<keyword id="KW-0139">CF(1)</keyword>
<keyword id="KW-0375">Hydrogen ion transport</keyword>
<keyword id="KW-0406">Ion transport</keyword>
<keyword id="KW-0472">Membrane</keyword>
<keyword id="KW-1185">Reference proteome</keyword>
<keyword id="KW-0813">Transport</keyword>
<evidence type="ECO:0000255" key="1">
    <source>
        <dbReference type="HAMAP-Rule" id="MF_00530"/>
    </source>
</evidence>
<feature type="chain" id="PRO_1000127883" description="ATP synthase epsilon chain">
    <location>
        <begin position="1"/>
        <end position="146"/>
    </location>
</feature>
<dbReference type="EMBL" id="CP000613">
    <property type="protein sequence ID" value="ACI99627.1"/>
    <property type="molecule type" value="Genomic_DNA"/>
</dbReference>
<dbReference type="RefSeq" id="WP_012567412.1">
    <property type="nucleotide sequence ID" value="NC_011420.2"/>
</dbReference>
<dbReference type="SMR" id="B6IPC5"/>
<dbReference type="STRING" id="414684.RC1_2240"/>
<dbReference type="KEGG" id="rce:RC1_2240"/>
<dbReference type="eggNOG" id="COG0355">
    <property type="taxonomic scope" value="Bacteria"/>
</dbReference>
<dbReference type="HOGENOM" id="CLU_084338_2_1_5"/>
<dbReference type="OrthoDB" id="9799969at2"/>
<dbReference type="Proteomes" id="UP000001591">
    <property type="component" value="Chromosome"/>
</dbReference>
<dbReference type="GO" id="GO:0005886">
    <property type="term" value="C:plasma membrane"/>
    <property type="evidence" value="ECO:0007669"/>
    <property type="project" value="UniProtKB-SubCell"/>
</dbReference>
<dbReference type="GO" id="GO:0045259">
    <property type="term" value="C:proton-transporting ATP synthase complex"/>
    <property type="evidence" value="ECO:0007669"/>
    <property type="project" value="UniProtKB-KW"/>
</dbReference>
<dbReference type="GO" id="GO:0005524">
    <property type="term" value="F:ATP binding"/>
    <property type="evidence" value="ECO:0007669"/>
    <property type="project" value="UniProtKB-UniRule"/>
</dbReference>
<dbReference type="GO" id="GO:0046933">
    <property type="term" value="F:proton-transporting ATP synthase activity, rotational mechanism"/>
    <property type="evidence" value="ECO:0007669"/>
    <property type="project" value="UniProtKB-UniRule"/>
</dbReference>
<dbReference type="CDD" id="cd12152">
    <property type="entry name" value="F1-ATPase_delta"/>
    <property type="match status" value="1"/>
</dbReference>
<dbReference type="Gene3D" id="2.60.15.10">
    <property type="entry name" value="F0F1 ATP synthase delta/epsilon subunit, N-terminal"/>
    <property type="match status" value="1"/>
</dbReference>
<dbReference type="HAMAP" id="MF_00530">
    <property type="entry name" value="ATP_synth_epsil_bac"/>
    <property type="match status" value="1"/>
</dbReference>
<dbReference type="InterPro" id="IPR001469">
    <property type="entry name" value="ATP_synth_F1_dsu/esu"/>
</dbReference>
<dbReference type="InterPro" id="IPR020546">
    <property type="entry name" value="ATP_synth_F1_dsu/esu_N"/>
</dbReference>
<dbReference type="InterPro" id="IPR036771">
    <property type="entry name" value="ATPsynth_dsu/esu_N"/>
</dbReference>
<dbReference type="NCBIfam" id="TIGR01216">
    <property type="entry name" value="ATP_synt_epsi"/>
    <property type="match status" value="1"/>
</dbReference>
<dbReference type="PANTHER" id="PTHR13822">
    <property type="entry name" value="ATP SYNTHASE DELTA/EPSILON CHAIN"/>
    <property type="match status" value="1"/>
</dbReference>
<dbReference type="PANTHER" id="PTHR13822:SF10">
    <property type="entry name" value="ATP SYNTHASE EPSILON CHAIN, CHLOROPLASTIC"/>
    <property type="match status" value="1"/>
</dbReference>
<dbReference type="Pfam" id="PF02823">
    <property type="entry name" value="ATP-synt_DE_N"/>
    <property type="match status" value="1"/>
</dbReference>
<dbReference type="SUPFAM" id="SSF51344">
    <property type="entry name" value="Epsilon subunit of F1F0-ATP synthase N-terminal domain"/>
    <property type="match status" value="1"/>
</dbReference>
<accession>B6IPC5</accession>
<comment type="function">
    <text evidence="1">Produces ATP from ADP in the presence of a proton gradient across the membrane.</text>
</comment>
<comment type="subunit">
    <text evidence="1">F-type ATPases have 2 components, CF(1) - the catalytic core - and CF(0) - the membrane proton channel. CF(1) has five subunits: alpha(3), beta(3), gamma(1), delta(1), epsilon(1). CF(0) has three main subunits: a, b and c.</text>
</comment>
<comment type="subcellular location">
    <subcellularLocation>
        <location evidence="1">Cell inner membrane</location>
        <topology evidence="1">Peripheral membrane protein</topology>
    </subcellularLocation>
</comment>
<comment type="similarity">
    <text evidence="1">Belongs to the ATPase epsilon chain family.</text>
</comment>
<organism>
    <name type="scientific">Rhodospirillum centenum (strain ATCC 51521 / SW)</name>
    <dbReference type="NCBI Taxonomy" id="414684"/>
    <lineage>
        <taxon>Bacteria</taxon>
        <taxon>Pseudomonadati</taxon>
        <taxon>Pseudomonadota</taxon>
        <taxon>Alphaproteobacteria</taxon>
        <taxon>Rhodospirillales</taxon>
        <taxon>Rhodospirillaceae</taxon>
        <taxon>Rhodospirillum</taxon>
    </lineage>
</organism>
<gene>
    <name evidence="1" type="primary">atpC</name>
    <name type="ordered locus">RC1_2240</name>
</gene>
<reference key="1">
    <citation type="submission" date="2007-03" db="EMBL/GenBank/DDBJ databases">
        <title>Genome sequence of Rhodospirillum centenum.</title>
        <authorList>
            <person name="Touchman J.W."/>
            <person name="Bauer C."/>
            <person name="Blankenship R.E."/>
        </authorList>
    </citation>
    <scope>NUCLEOTIDE SEQUENCE [LARGE SCALE GENOMIC DNA]</scope>
    <source>
        <strain>ATCC 51521 / SW</strain>
    </source>
</reference>
<sequence>MADKLEFELVSPEKLLVSQPVAMVVVPGADGLFGVLPGHAPMIVTVRPGIIDVYGDNQTTVSRRIFVAGGFAEVTDTRCTVLAEEASDLDALLKSDTAALEKQISDLREDIEDATSDVERRALETRLVTTQAKLDLIASQQDAEAA</sequence>